<reference key="1">
    <citation type="submission" date="2013-09" db="EMBL/GenBank/DDBJ databases">
        <authorList>
            <person name="Durkin A.S."/>
            <person name="Haft D.R."/>
            <person name="McCorrison J."/>
            <person name="Torralba M."/>
            <person name="Gillis M."/>
            <person name="Haft D.H."/>
            <person name="Methe B."/>
            <person name="Sutton G."/>
            <person name="Nelson K.E."/>
        </authorList>
    </citation>
    <scope>NUCLEOTIDE SEQUENCE [LARGE SCALE GENOMIC DNA]</scope>
    <source>
        <strain>BV3L6</strain>
    </source>
</reference>
<reference key="2">
    <citation type="journal article" date="2015" name="Cell">
        <title>Cpf1 is a single RNA-guided endonuclease of a class 2 CRISPR-Cas system.</title>
        <authorList>
            <person name="Zetsche B."/>
            <person name="Gootenberg J.S."/>
            <person name="Abudayyeh O.O."/>
            <person name="Slaymaker I.M."/>
            <person name="Makarova K.S."/>
            <person name="Essletzbichler P."/>
            <person name="Volz S.E."/>
            <person name="Joung J."/>
            <person name="van der Oost J."/>
            <person name="Regev A."/>
            <person name="Koonin E.V."/>
            <person name="Zhang F."/>
        </authorList>
    </citation>
    <scope>FUNCTION AS AN ENDONUCLEASE</scope>
    <scope>BIOTECHNOLOGY</scope>
    <source>
        <strain>BV3L6</strain>
    </source>
</reference>
<reference key="3">
    <citation type="journal article" date="2015" name="Mol. Cell">
        <title>Discovery and functional characterization of diverse class 2 CRISPR-Cas systems.</title>
        <authorList>
            <person name="Shmakov S."/>
            <person name="Abudayyeh O.O."/>
            <person name="Makarova K.S."/>
            <person name="Wolf Y.I."/>
            <person name="Gootenberg J.S."/>
            <person name="Semenova E."/>
            <person name="Minakhin L."/>
            <person name="Joung J."/>
            <person name="Konermann S."/>
            <person name="Severinov K."/>
            <person name="Zhang F."/>
            <person name="Koonin E.V."/>
        </authorList>
    </citation>
    <scope>DISCUSSION OF SEQUENCE</scope>
</reference>
<reference key="4">
    <citation type="journal article" date="2016" name="Nat. Biotechnol.">
        <title>Genome-wide specificities of CRISPR-Cas Cpf1 nucleases in human cells.</title>
        <authorList>
            <person name="Kleinstiver B.P."/>
            <person name="Tsai S.Q."/>
            <person name="Prew M.S."/>
            <person name="Nguyen N.T."/>
            <person name="Welch M.M."/>
            <person name="Lopez J.M."/>
            <person name="McCaw Z.R."/>
            <person name="Aryee M.J."/>
            <person name="Joung J.K."/>
        </authorList>
    </citation>
    <scope>BIOTECHNOLOGY</scope>
</reference>
<reference key="5">
    <citation type="journal article" date="2017" name="Nat. Rev. Microbiol.">
        <title>Diversity and evolution of class 2 CRISPR-Cas systems.</title>
        <authorList>
            <person name="Shmakov S."/>
            <person name="Smargon A."/>
            <person name="Scott D."/>
            <person name="Cox D."/>
            <person name="Pyzocha N."/>
            <person name="Yan W."/>
            <person name="Abudayyeh O.O."/>
            <person name="Gootenberg J.S."/>
            <person name="Makarova K.S."/>
            <person name="Wolf Y.I."/>
            <person name="Severinov K."/>
            <person name="Zhang F."/>
            <person name="Koonin E.V."/>
        </authorList>
    </citation>
    <scope>NOMENCLATURE</scope>
</reference>
<reference key="6">
    <citation type="journal article" date="2024" name="Nucleic Acids Res.">
        <title>Innate programmable DNA binding by CRISPR-Cas12m effectors enable efficient base editing.</title>
        <authorList>
            <person name="Bigelyte G."/>
            <person name="Duchovska B."/>
            <person name="Zedaveinyte R."/>
            <person name="Sasnauskas G."/>
            <person name="Sinkunas T."/>
            <person name="Dalgediene I."/>
            <person name="Tamulaitiene G."/>
            <person name="Silanskas A."/>
            <person name="Kazlauskas D."/>
            <person name="Valancauskas L."/>
            <person name="Madariaga-Marcos J."/>
            <person name="Seidel R."/>
            <person name="Siksnys V."/>
            <person name="Karvelis T."/>
        </authorList>
    </citation>
    <scope>FUNCTION IN PLASMID SILENCING</scope>
    <scope>FUNCTION IN PHAGE RESISTANCE</scope>
    <scope>MUTAGENESIS OF ASP-908</scope>
</reference>
<reference key="7">
    <citation type="journal article" date="2023" name="Nat. Commun.">
        <title>Assessing and advancing the safety of CRISPR-Cas tools: from DNA to RNA editing.</title>
        <authorList>
            <person name="Tao J."/>
            <person name="Bauer D.E."/>
            <person name="Chiarle R."/>
        </authorList>
    </citation>
    <scope>REVIEW ON SAFETY OF GENOME EDITING TOOLS</scope>
</reference>
<reference evidence="15" key="8">
    <citation type="journal article" date="2016" name="Cell">
        <title>Crystal structure of Cpf1 in complex with guide RNA and target DNA.</title>
        <authorList>
            <person name="Yamano T."/>
            <person name="Nishimasu H."/>
            <person name="Zetsche B."/>
            <person name="Hirano H."/>
            <person name="Slaymaker I.M."/>
            <person name="Li Y."/>
            <person name="Fedorova I."/>
            <person name="Nakane T."/>
            <person name="Makarova K.S."/>
            <person name="Koonin E.V."/>
            <person name="Ishitani R."/>
            <person name="Zhang F."/>
            <person name="Nureki O."/>
        </authorList>
    </citation>
    <scope>X-RAY CRYSTALLOGRAPHY (2.80 ANGSTROMS) IN COMPLEX WITH GUIDE RNA AND TARGET DNA</scope>
    <scope>FUNCTION</scope>
    <scope>ACTIVE SITE</scope>
    <scope>SUBUNIT</scope>
    <scope>DOMAIN</scope>
    <scope>MUTAGENESIS OF THR-167; ARG-176; ARG-192; TRP-382; LYS-548; MET-604; LYS-607; LYS-780; GLY-783; ASP-908; ARG-951; ARG-955; TRP-958; GLU-993; ARG-1226; SER-1228; ASP-1235 AND ASP-1263</scope>
</reference>
<reference evidence="16" key="9">
    <citation type="journal article" date="2016" name="Cell Res.">
        <title>Type V CRISPR-Cas Cpf1 endonuclease employs a unique mechanism for crRNA-mediated target DNA recognition.</title>
        <authorList>
            <person name="Gao P."/>
            <person name="Yang H."/>
            <person name="Rajashankar K.R."/>
            <person name="Huang Z."/>
            <person name="Patel D.J."/>
        </authorList>
    </citation>
    <scope>X-RAY CRYSTALLOGRAPHY (3.29 ANGSTROMS) IN COMPLEX WITH CRRNA AND TARGET DNA</scope>
    <scope>SUBUNIT</scope>
    <scope>DOMAIN</scope>
    <scope>DNA-BINDING</scope>
    <scope>RNA-BINDING</scope>
</reference>
<reference evidence="17 18" key="10">
    <citation type="journal article" date="2017" name="Mol. Cell">
        <title>Structural basis for the altered PAM recognition by engineered CRISPR-Cpf1.</title>
        <authorList>
            <person name="Nishimasu H."/>
            <person name="Yamano T."/>
            <person name="Gao L."/>
            <person name="Zhang F."/>
            <person name="Ishitani R."/>
            <person name="Nureki O."/>
        </authorList>
    </citation>
    <scope>X-RAY CRYSTALLOGRAPHY (2.00 ANGSTROMS) OF MUTANT PROTEIN ABLE TO RECOGNIZE ALTERED PAM</scope>
    <scope>BIOTECHNOLOGY</scope>
</reference>
<name>CS12A_ACISB</name>
<feature type="chain" id="PRO_0000434903" description="CRISPR-associated endonuclease Cas12a">
    <location>
        <begin position="1"/>
        <end position="1307"/>
    </location>
</feature>
<feature type="DNA-binding region" description="PAM-binding on target DNA" evidence="4 6">
    <location>
        <begin position="599"/>
        <end position="607"/>
    </location>
</feature>
<feature type="DNA-binding region" description="Target DNA" evidence="4 6">
    <location>
        <begin position="780"/>
        <end position="783"/>
    </location>
</feature>
<feature type="DNA-binding region" description="Target DNA" evidence="4 6">
    <location>
        <begin position="951"/>
        <end position="968"/>
    </location>
</feature>
<feature type="DNA-binding region" description="Target DNA" evidence="4 6">
    <location>
        <begin position="1051"/>
        <end position="1053"/>
    </location>
</feature>
<feature type="region of interest" description="WED-I (OBD-I)" evidence="10 11">
    <location>
        <begin position="1"/>
        <end position="35"/>
    </location>
</feature>
<feature type="region of interest" description="REC1 (helical-I)" evidence="10 11">
    <location>
        <begin position="36"/>
        <end position="320"/>
    </location>
</feature>
<feature type="region of interest" description="WED-II (helical-II)" evidence="10 11">
    <location>
        <begin position="321"/>
        <end position="526"/>
    </location>
</feature>
<feature type="region of interest" description="WED-II (OBD-I)" evidence="10 11">
    <location>
        <begin position="527"/>
        <end position="598"/>
    </location>
</feature>
<feature type="region of interest" description="PI (LHD)" evidence="10 11">
    <location>
        <begin position="599"/>
        <end position="718"/>
    </location>
</feature>
<feature type="region of interest" description="WED-III (OBD-III)" evidence="10 11">
    <location>
        <begin position="719"/>
        <end position="884"/>
    </location>
</feature>
<feature type="region of interest" description="RuvC-I" evidence="10 11">
    <location>
        <begin position="885"/>
        <end position="940"/>
    </location>
</feature>
<feature type="region of interest" description="Bridge helix" evidence="10 11">
    <location>
        <begin position="941"/>
        <end position="957"/>
    </location>
</feature>
<feature type="region of interest" description="RuvC-II" evidence="10 11">
    <location>
        <begin position="958"/>
        <end position="1066"/>
    </location>
</feature>
<feature type="region of interest" description="Nuclease domain" evidence="10 11">
    <location>
        <begin position="1067"/>
        <end position="1262"/>
    </location>
</feature>
<feature type="region of interest" description="RuvC-III" evidence="10 11">
    <location>
        <begin position="1263"/>
        <end position="1307"/>
    </location>
</feature>
<feature type="coiled-coil region" evidence="2">
    <location>
        <begin position="74"/>
        <end position="106"/>
    </location>
</feature>
<feature type="active site" description="For pre-crRNA processing" evidence="1">
    <location>
        <position position="800"/>
    </location>
</feature>
<feature type="active site" description="For pre-crRNA processing" evidence="1">
    <location>
        <position position="809"/>
    </location>
</feature>
<feature type="active site" description="For pre-crRNA processing" evidence="1">
    <location>
        <position position="860"/>
    </location>
</feature>
<feature type="active site" description="For DNase activity of RuvC domain" evidence="4">
    <location>
        <position position="908"/>
    </location>
</feature>
<feature type="active site" description="For DNase activity of RuvC domain" evidence="4">
    <location>
        <position position="993"/>
    </location>
</feature>
<feature type="active site" description="For DNase activity of nuclease domain" evidence="4">
    <location>
        <position position="1226"/>
    </location>
</feature>
<feature type="active site" description="For DNase activity of RuvC domain" evidence="4">
    <location>
        <position position="1263"/>
    </location>
</feature>
<feature type="binding site" evidence="4 6">
    <location>
        <begin position="47"/>
        <end position="51"/>
    </location>
    <ligand>
        <name>crRNA</name>
        <dbReference type="ChEBI" id="CHEBI:134528"/>
    </ligand>
</feature>
<feature type="binding site" evidence="4 6">
    <location>
        <begin position="175"/>
        <end position="176"/>
    </location>
    <ligand>
        <name>crRNA</name>
        <dbReference type="ChEBI" id="CHEBI:134528"/>
    </ligand>
</feature>
<feature type="binding site" evidence="4 6">
    <location>
        <begin position="307"/>
        <end position="310"/>
    </location>
    <ligand>
        <name>crRNA</name>
        <dbReference type="ChEBI" id="CHEBI:134528"/>
    </ligand>
</feature>
<feature type="binding site" evidence="4 6">
    <location>
        <begin position="752"/>
        <end position="761"/>
    </location>
    <ligand>
        <name>crRNA</name>
        <dbReference type="ChEBI" id="CHEBI:134528"/>
    </ligand>
</feature>
<feature type="binding site" evidence="4">
    <location>
        <begin position="806"/>
        <end position="808"/>
    </location>
    <ligand>
        <name>crRNA</name>
        <dbReference type="ChEBI" id="CHEBI:134528"/>
    </ligand>
</feature>
<feature type="site" description="Binds crRNA" evidence="4 6">
    <location>
        <position position="18"/>
    </location>
</feature>
<feature type="site" description="Binds PAM on target DNA" evidence="4 6">
    <location>
        <position position="167"/>
    </location>
</feature>
<feature type="site" description="Binds crRNA" evidence="4 6">
    <location>
        <position position="192"/>
    </location>
</feature>
<feature type="site" description="Binds crRNA-target DNA heteroduplex" evidence="4 6">
    <location>
        <position position="382"/>
    </location>
</feature>
<feature type="site" description="Binds PAM on target DNA" evidence="4 6">
    <location>
        <position position="548"/>
    </location>
</feature>
<feature type="site" description="Binds sequence-specific recognition of both target and non-target strand bases in PAM" evidence="4 6">
    <location>
        <position position="607"/>
    </location>
</feature>
<feature type="site" description="Binds crRNA" evidence="4 6">
    <location>
        <position position="872"/>
    </location>
</feature>
<feature type="site" description="Binds target DNA" evidence="4">
    <location>
        <position position="1014"/>
    </location>
</feature>
<feature type="mutagenesis site" description="Wild-type to slightly improved guided indel formation." evidence="4">
    <original>T</original>
    <variation>A</variation>
    <location>
        <position position="167"/>
    </location>
</feature>
<feature type="mutagenesis site" description="Decreased guided indel formation." evidence="4">
    <original>R</original>
    <variation>A</variation>
    <location>
        <position position="176"/>
    </location>
</feature>
<feature type="mutagenesis site" description="Decreased guided indel formation." evidence="4">
    <original>R</original>
    <variation>A</variation>
    <location>
        <position position="192"/>
    </location>
</feature>
<feature type="mutagenesis site" description="Nearly complete loss of guided indel formation." evidence="4">
    <original>W</original>
    <variation>A</variation>
    <location>
        <position position="382"/>
    </location>
</feature>
<feature type="mutagenesis site" description="Decreased guided indel formation." evidence="4">
    <original>K</original>
    <variation>A</variation>
    <location>
        <position position="548"/>
    </location>
</feature>
<feature type="mutagenesis site" description="Decreased guided indel formation." evidence="4">
    <original>M</original>
    <variation>A</variation>
    <location>
        <position position="604"/>
    </location>
</feature>
<feature type="mutagenesis site" description="Nearly complete loss of guided indel formation, probable loss of PAM recognition." evidence="4">
    <original>K</original>
    <variation>A</variation>
    <location>
        <position position="607"/>
    </location>
</feature>
<feature type="mutagenesis site" description="Nearly complete loss of guided indel formation." evidence="4">
    <original>K</original>
    <variation>A</variation>
    <location>
        <position position="780"/>
    </location>
</feature>
<feature type="mutagenesis site" description="Complete loss of guided indel formation." evidence="4">
    <original>G</original>
    <variation>P</variation>
    <location>
        <position position="783"/>
    </location>
</feature>
<feature type="mutagenesis site" description="No longer provides resistance to plasmids or phage in E.coli." evidence="8">
    <original>D</original>
    <variation>A</variation>
    <location>
        <position position="908"/>
    </location>
</feature>
<feature type="mutagenesis site" description="Complete loss of guided indel formation; neither DNA strand is cleaved in vitro." evidence="4">
    <original>D</original>
    <variation>P</variation>
    <location>
        <position position="908"/>
    </location>
</feature>
<feature type="mutagenesis site" description="Nearly complete loss of guided indel formation." evidence="4">
    <original>R</original>
    <variation>A</variation>
    <location>
        <position position="951"/>
    </location>
</feature>
<feature type="mutagenesis site" description="Partial loss of guided indel formation." evidence="4">
    <original>R</original>
    <variation>A</variation>
    <location>
        <position position="955"/>
    </location>
</feature>
<feature type="mutagenesis site" description="Partial loss of guided indel formation." evidence="4">
    <original>W</original>
    <variation>A</variation>
    <location>
        <position position="958"/>
    </location>
</feature>
<feature type="mutagenesis site" description="Complete loss of guided indel formation; neither DNA strand is cleaved in vitro." evidence="4">
    <original>E</original>
    <variation>P</variation>
    <location>
        <position position="993"/>
    </location>
</feature>
<feature type="mutagenesis site" description="Nearly complete loss of guided indel formation; nickase cleaves only the non-target DNA strand in vitro." evidence="4">
    <original>R</original>
    <variation>A</variation>
    <location>
        <position position="1226"/>
    </location>
</feature>
<feature type="mutagenesis site" description="Wild-type to slightly improved guided indel formation." evidence="4">
    <original>S</original>
    <variation>A</variation>
    <location>
        <position position="1228"/>
    </location>
</feature>
<feature type="mutagenesis site" description="About half loss of guided indel formation." evidence="4">
    <original>D</original>
    <variation>A</variation>
    <location>
        <position position="1235"/>
    </location>
</feature>
<feature type="mutagenesis site" description="Nearly complete loss of guided indel formation; neither DNA strand is cleaved in vitro." evidence="4">
    <original>D</original>
    <variation>A</variation>
    <location>
        <position position="1263"/>
    </location>
</feature>
<feature type="helix" evidence="21">
    <location>
        <begin position="4"/>
        <end position="6"/>
    </location>
</feature>
<feature type="strand" evidence="21">
    <location>
        <begin position="8"/>
        <end position="11"/>
    </location>
</feature>
<feature type="strand" evidence="21">
    <location>
        <begin position="13"/>
        <end position="23"/>
    </location>
</feature>
<feature type="helix" evidence="21">
    <location>
        <begin position="27"/>
        <end position="34"/>
    </location>
</feature>
<feature type="helix" evidence="21">
    <location>
        <begin position="36"/>
        <end position="68"/>
    </location>
</feature>
<feature type="helix" evidence="21">
    <location>
        <begin position="74"/>
        <end position="86"/>
    </location>
</feature>
<feature type="helix" evidence="21">
    <location>
        <begin position="89"/>
        <end position="111"/>
    </location>
</feature>
<feature type="strand" evidence="20">
    <location>
        <begin position="115"/>
        <end position="117"/>
    </location>
</feature>
<feature type="helix" evidence="21">
    <location>
        <begin position="119"/>
        <end position="129"/>
    </location>
</feature>
<feature type="turn" evidence="21">
    <location>
        <begin position="130"/>
        <end position="133"/>
    </location>
</feature>
<feature type="helix" evidence="21">
    <location>
        <begin position="135"/>
        <end position="138"/>
    </location>
</feature>
<feature type="helix" evidence="21">
    <location>
        <begin position="141"/>
        <end position="146"/>
    </location>
</feature>
<feature type="helix" evidence="21">
    <location>
        <begin position="153"/>
        <end position="160"/>
    </location>
</feature>
<feature type="turn" evidence="21">
    <location>
        <begin position="161"/>
        <end position="164"/>
    </location>
</feature>
<feature type="helix" evidence="21">
    <location>
        <begin position="166"/>
        <end position="169"/>
    </location>
</feature>
<feature type="helix" evidence="21">
    <location>
        <begin position="170"/>
        <end position="180"/>
    </location>
</feature>
<feature type="strand" evidence="23">
    <location>
        <begin position="186"/>
        <end position="188"/>
    </location>
</feature>
<feature type="helix" evidence="21">
    <location>
        <begin position="189"/>
        <end position="195"/>
    </location>
</feature>
<feature type="helix" evidence="21">
    <location>
        <begin position="197"/>
        <end position="214"/>
    </location>
</feature>
<feature type="helix" evidence="21">
    <location>
        <begin position="217"/>
        <end position="229"/>
    </location>
</feature>
<feature type="strand" evidence="27">
    <location>
        <begin position="233"/>
        <end position="235"/>
    </location>
</feature>
<feature type="helix" evidence="21">
    <location>
        <begin position="237"/>
        <end position="240"/>
    </location>
</feature>
<feature type="helix" evidence="21">
    <location>
        <begin position="243"/>
        <end position="248"/>
    </location>
</feature>
<feature type="strand" evidence="21">
    <location>
        <begin position="249"/>
        <end position="251"/>
    </location>
</feature>
<feature type="helix" evidence="21">
    <location>
        <begin position="252"/>
        <end position="263"/>
    </location>
</feature>
<feature type="helix" evidence="21">
    <location>
        <begin position="277"/>
        <end position="286"/>
    </location>
</feature>
<feature type="helix" evidence="21">
    <location>
        <begin position="290"/>
        <end position="297"/>
    </location>
</feature>
<feature type="helix" evidence="21">
    <location>
        <begin position="326"/>
        <end position="342"/>
    </location>
</feature>
<feature type="helix" evidence="21">
    <location>
        <begin position="345"/>
        <end position="355"/>
    </location>
</feature>
<feature type="turn" evidence="21">
    <location>
        <begin position="356"/>
        <end position="358"/>
    </location>
</feature>
<feature type="helix" evidence="21">
    <location>
        <begin position="361"/>
        <end position="363"/>
    </location>
</feature>
<feature type="helix" evidence="21">
    <location>
        <begin position="368"/>
        <end position="370"/>
    </location>
</feature>
<feature type="helix" evidence="21">
    <location>
        <begin position="371"/>
        <end position="378"/>
    </location>
</feature>
<feature type="strand" evidence="21">
    <location>
        <begin position="379"/>
        <end position="381"/>
    </location>
</feature>
<feature type="helix" evidence="21">
    <location>
        <begin position="384"/>
        <end position="394"/>
    </location>
</feature>
<feature type="helix" evidence="21">
    <location>
        <begin position="403"/>
        <end position="415"/>
    </location>
</feature>
<feature type="helix" evidence="21">
    <location>
        <begin position="420"/>
        <end position="427"/>
    </location>
</feature>
<feature type="helix" evidence="21">
    <location>
        <begin position="429"/>
        <end position="451"/>
    </location>
</feature>
<feature type="strand" evidence="25">
    <location>
        <begin position="458"/>
        <end position="460"/>
    </location>
</feature>
<feature type="helix" evidence="21">
    <location>
        <begin position="461"/>
        <end position="481"/>
    </location>
</feature>
<feature type="strand" evidence="26">
    <location>
        <begin position="489"/>
        <end position="491"/>
    </location>
</feature>
<feature type="helix" evidence="21">
    <location>
        <begin position="494"/>
        <end position="507"/>
    </location>
</feature>
<feature type="helix" evidence="21">
    <location>
        <begin position="509"/>
        <end position="521"/>
    </location>
</feature>
<feature type="strand" evidence="22">
    <location>
        <begin position="531"/>
        <end position="533"/>
    </location>
</feature>
<feature type="turn" evidence="21">
    <location>
        <begin position="538"/>
        <end position="541"/>
    </location>
</feature>
<feature type="helix" evidence="21">
    <location>
        <begin position="546"/>
        <end position="548"/>
    </location>
</feature>
<feature type="helix" evidence="21">
    <location>
        <begin position="549"/>
        <end position="552"/>
    </location>
</feature>
<feature type="strand" evidence="21">
    <location>
        <begin position="554"/>
        <end position="559"/>
    </location>
</feature>
<feature type="strand" evidence="21">
    <location>
        <begin position="562"/>
        <end position="567"/>
    </location>
</feature>
<feature type="strand" evidence="25">
    <location>
        <begin position="572"/>
        <end position="574"/>
    </location>
</feature>
<feature type="strand" evidence="21">
    <location>
        <begin position="587"/>
        <end position="597"/>
    </location>
</feature>
<feature type="helix" evidence="21">
    <location>
        <begin position="601"/>
        <end position="607"/>
    </location>
</feature>
<feature type="turn" evidence="21">
    <location>
        <begin position="608"/>
        <end position="611"/>
    </location>
</feature>
<feature type="helix" evidence="21">
    <location>
        <begin position="613"/>
        <end position="621"/>
    </location>
</feature>
<feature type="strand" evidence="21">
    <location>
        <begin position="626"/>
        <end position="628"/>
    </location>
</feature>
<feature type="strand" evidence="21">
    <location>
        <begin position="632"/>
        <end position="634"/>
    </location>
</feature>
<feature type="strand" evidence="21">
    <location>
        <begin position="636"/>
        <end position="638"/>
    </location>
</feature>
<feature type="helix" evidence="21">
    <location>
        <begin position="640"/>
        <end position="646"/>
    </location>
</feature>
<feature type="strand" evidence="21">
    <location>
        <begin position="649"/>
        <end position="652"/>
    </location>
</feature>
<feature type="strand" evidence="20">
    <location>
        <begin position="654"/>
        <end position="656"/>
    </location>
</feature>
<feature type="helix" evidence="21">
    <location>
        <begin position="657"/>
        <end position="663"/>
    </location>
</feature>
<feature type="helix" evidence="21">
    <location>
        <begin position="666"/>
        <end position="686"/>
    </location>
</feature>
<feature type="turn" evidence="21">
    <location>
        <begin position="688"/>
        <end position="692"/>
    </location>
</feature>
<feature type="helix" evidence="27">
    <location>
        <begin position="695"/>
        <end position="697"/>
    </location>
</feature>
<feature type="helix" evidence="21">
    <location>
        <begin position="701"/>
        <end position="703"/>
    </location>
</feature>
<feature type="helix" evidence="21">
    <location>
        <begin position="707"/>
        <end position="714"/>
    </location>
</feature>
<feature type="helix" evidence="21">
    <location>
        <begin position="715"/>
        <end position="718"/>
    </location>
</feature>
<feature type="strand" evidence="21">
    <location>
        <begin position="719"/>
        <end position="727"/>
    </location>
</feature>
<feature type="helix" evidence="21">
    <location>
        <begin position="728"/>
        <end position="736"/>
    </location>
</feature>
<feature type="strand" evidence="19">
    <location>
        <begin position="737"/>
        <end position="739"/>
    </location>
</feature>
<feature type="strand" evidence="21">
    <location>
        <begin position="741"/>
        <end position="746"/>
    </location>
</feature>
<feature type="helix" evidence="21">
    <location>
        <begin position="748"/>
        <end position="750"/>
    </location>
</feature>
<feature type="strand" evidence="20">
    <location>
        <begin position="751"/>
        <end position="753"/>
    </location>
</feature>
<feature type="helix" evidence="21">
    <location>
        <begin position="760"/>
        <end position="768"/>
    </location>
</feature>
<feature type="helix" evidence="21">
    <location>
        <begin position="771"/>
        <end position="775"/>
    </location>
</feature>
<feature type="strand" evidence="21">
    <location>
        <begin position="778"/>
        <end position="781"/>
    </location>
</feature>
<feature type="strand" evidence="21">
    <location>
        <begin position="786"/>
        <end position="790"/>
    </location>
</feature>
<feature type="strand" evidence="21">
    <location>
        <begin position="804"/>
        <end position="807"/>
    </location>
</feature>
<feature type="strand" evidence="19">
    <location>
        <begin position="812"/>
        <end position="817"/>
    </location>
</feature>
<feature type="helix" evidence="21">
    <location>
        <begin position="820"/>
        <end position="830"/>
    </location>
</feature>
<feature type="helix" evidence="21">
    <location>
        <begin position="840"/>
        <end position="845"/>
    </location>
</feature>
<feature type="helix" evidence="21">
    <location>
        <begin position="846"/>
        <end position="848"/>
    </location>
</feature>
<feature type="strand" evidence="21">
    <location>
        <begin position="851"/>
        <end position="853"/>
    </location>
</feature>
<feature type="helix" evidence="21">
    <location>
        <begin position="862"/>
        <end position="864"/>
    </location>
</feature>
<feature type="strand" evidence="21">
    <location>
        <begin position="868"/>
        <end position="878"/>
    </location>
</feature>
<feature type="strand" evidence="20">
    <location>
        <begin position="879"/>
        <end position="884"/>
    </location>
</feature>
<feature type="helix" evidence="21">
    <location>
        <begin position="888"/>
        <end position="898"/>
    </location>
</feature>
<feature type="strand" evidence="21">
    <location>
        <begin position="904"/>
        <end position="908"/>
    </location>
</feature>
<feature type="strand" evidence="20">
    <location>
        <begin position="911"/>
        <end position="914"/>
    </location>
</feature>
<feature type="strand" evidence="21">
    <location>
        <begin position="916"/>
        <end position="920"/>
    </location>
</feature>
<feature type="strand" evidence="21">
    <location>
        <begin position="926"/>
        <end position="931"/>
    </location>
</feature>
<feature type="strand" evidence="21">
    <location>
        <begin position="933"/>
        <end position="935"/>
    </location>
</feature>
<feature type="strand" evidence="26">
    <location>
        <begin position="936"/>
        <end position="938"/>
    </location>
</feature>
<feature type="helix" evidence="21">
    <location>
        <begin position="940"/>
        <end position="956"/>
    </location>
</feature>
<feature type="helix" evidence="21">
    <location>
        <begin position="965"/>
        <end position="986"/>
    </location>
</feature>
<feature type="strand" evidence="21">
    <location>
        <begin position="989"/>
        <end position="993"/>
    </location>
</feature>
<feature type="turn" evidence="25">
    <location>
        <begin position="995"/>
        <end position="997"/>
    </location>
</feature>
<feature type="strand" evidence="24">
    <location>
        <begin position="1002"/>
        <end position="1006"/>
    </location>
</feature>
<feature type="helix" evidence="21">
    <location>
        <begin position="1011"/>
        <end position="1024"/>
    </location>
</feature>
<feature type="strand" evidence="25">
    <location>
        <begin position="1029"/>
        <end position="1031"/>
    </location>
</feature>
<feature type="strand" evidence="25">
    <location>
        <begin position="1033"/>
        <end position="1035"/>
    </location>
</feature>
<feature type="strand" evidence="20">
    <location>
        <begin position="1038"/>
        <end position="1041"/>
    </location>
</feature>
<feature type="turn" evidence="25">
    <location>
        <begin position="1052"/>
        <end position="1054"/>
    </location>
</feature>
<feature type="strand" evidence="21">
    <location>
        <begin position="1057"/>
        <end position="1059"/>
    </location>
</feature>
<feature type="strand" evidence="21">
    <location>
        <begin position="1062"/>
        <end position="1065"/>
    </location>
</feature>
<feature type="strand" evidence="21">
    <location>
        <begin position="1070"/>
        <end position="1073"/>
    </location>
</feature>
<feature type="turn" evidence="21">
    <location>
        <begin position="1075"/>
        <end position="1077"/>
    </location>
</feature>
<feature type="helix" evidence="21">
    <location>
        <begin position="1085"/>
        <end position="1087"/>
    </location>
</feature>
<feature type="helix" evidence="21">
    <location>
        <begin position="1091"/>
        <end position="1099"/>
    </location>
</feature>
<feature type="strand" evidence="21">
    <location>
        <begin position="1101"/>
        <end position="1106"/>
    </location>
</feature>
<feature type="turn" evidence="21">
    <location>
        <begin position="1108"/>
        <end position="1110"/>
    </location>
</feature>
<feature type="strand" evidence="21">
    <location>
        <begin position="1113"/>
        <end position="1118"/>
    </location>
</feature>
<feature type="helix" evidence="21">
    <location>
        <begin position="1123"/>
        <end position="1125"/>
    </location>
</feature>
<feature type="strand" evidence="21">
    <location>
        <begin position="1134"/>
        <end position="1140"/>
    </location>
</feature>
<feature type="strand" evidence="21">
    <location>
        <begin position="1145"/>
        <end position="1147"/>
    </location>
</feature>
<feature type="strand" evidence="21">
    <location>
        <begin position="1153"/>
        <end position="1155"/>
    </location>
</feature>
<feature type="strand" evidence="21">
    <location>
        <begin position="1159"/>
        <end position="1161"/>
    </location>
</feature>
<feature type="turn" evidence="26">
    <location>
        <begin position="1167"/>
        <end position="1169"/>
    </location>
</feature>
<feature type="strand" evidence="21">
    <location>
        <begin position="1174"/>
        <end position="1176"/>
    </location>
</feature>
<feature type="helix" evidence="21">
    <location>
        <begin position="1178"/>
        <end position="1188"/>
    </location>
</feature>
<feature type="helix" evidence="25">
    <location>
        <begin position="1193"/>
        <end position="1195"/>
    </location>
</feature>
<feature type="helix" evidence="21">
    <location>
        <begin position="1200"/>
        <end position="1206"/>
    </location>
</feature>
<feature type="helix" evidence="21">
    <location>
        <begin position="1209"/>
        <end position="1223"/>
    </location>
</feature>
<feature type="strand" evidence="21">
    <location>
        <begin position="1226"/>
        <end position="1229"/>
    </location>
</feature>
<feature type="turn" evidence="21">
    <location>
        <begin position="1230"/>
        <end position="1233"/>
    </location>
</feature>
<feature type="strand" evidence="21">
    <location>
        <begin position="1234"/>
        <end position="1242"/>
    </location>
</feature>
<feature type="strand" evidence="25">
    <location>
        <begin position="1244"/>
        <end position="1246"/>
    </location>
</feature>
<feature type="strand" evidence="21">
    <location>
        <begin position="1248"/>
        <end position="1250"/>
    </location>
</feature>
<feature type="helix" evidence="21">
    <location>
        <begin position="1251"/>
        <end position="1253"/>
    </location>
</feature>
<feature type="helix" evidence="21">
    <location>
        <begin position="1262"/>
        <end position="1283"/>
    </location>
</feature>
<feature type="strand" evidence="21">
    <location>
        <begin position="1284"/>
        <end position="1287"/>
    </location>
</feature>
<feature type="helix" evidence="21">
    <location>
        <begin position="1295"/>
        <end position="1306"/>
    </location>
</feature>
<sequence length="1307" mass="151207">MTQFEGFTNLYQVSKTLRFELIPQGKTLKHIQEQGFIEEDKARNDHYKELKPIIDRIYKTYADQCLQLVQLDWENLSAAIDSYRKEKTEETRNALIEEQATYRNAIHDYFIGRTDNLTDAINKRHAEIYKGLFKAELFNGKVLKQLGTVTTTEHENALLRSFDKFTTYFSGFYENRKNVFSAEDISTAIPHRIVQDNFPKFKENCHIFTRLITAVPSLREHFENVKKAIGIFVSTSIEEVFSFPFYNQLLTQTQIDLYNQLLGGISREAGTEKIKGLNEVLNLAIQKNDETAHIIASLPHRFIPLFKQILSDRNTLSFILEEFKSDEEVIQSFCKYKTLLRNENVLETAEALFNELNSIDLTHIFISHKKLETISSALCDHWDTLRNALYERRISELTGKITKSAKEKVQRSLKHEDINLQEIISAAGKELSEAFKQKTSEILSHAHAALDQPLPTTLKKQEEKEILKSQLDSLLGLYHLLDWFAVDESNEVDPEFSARLTGIKLEMEPSLSFYNKARNYATKKPYSVEKFKLNFQMPTLASGWDVNKEKNNGAILFVKNGLYYLGIMPKQKGRYKALSFEPTEKTSEGFDKMYYDYFPDAAKMIPKCSTQLKAVTAHFQTHTTPILLSNNFIEPLEITKEIYDLNNPEKEPKKFQTAYAKKTGDQKGYREALCKWIDFTRDFLSKYTKTTSIDLSSLRPSSQYKDLGEYYAELNPLLYHISFQRIAEKEIMDAVETGKLYLFQIYNKDFAKGHHGKPNLHTLYWTGLFSPENLAKTSIKLNGQAELFYRPKSRMKRMAHRLGEKMLNKKLKDQKTPIPDTLYQELYDYVNHRLSHDLSDEARALLPNVITKEVSHEIIKDRRFTSDKFFFHVPITLNYQAANSPSKFNQRVNAYLKEHPETPIIGIDRGERNLIYITVIDSTGKILEQRSLNTIQQFDYQKKLDNREKERVAARQAWSVVGTIKDLKQGYLSQVIHEIVDLMIHYQAVVVLENLNFGFKSKRTGIAEKAVYQQFEKMLIDKLNCLVLKDYPAEKVGGVLNPYQLTDQFTSFAKMGTQSGFLFYVPAPYTSKIDPLTGFVDPFVWKTIKNHESRKHFLEGFDFLHYDVKTGDFILHFKMNRNLSFQRGLPGFMPAWDIVFEKNETQFDAKGTPFIAGKRIVPVIENHRFTGRYRDLYPANELIALLEEKGIVFRDGSNILPKLLENDDSHAIDTMVALIRSVLQMRNSNAATGEDYINSPVRDLNGVCFDSRFQNPEWPMDADANGAYHIALKGQLLLNHLKESKDLKLQNGISNQDWLAYIQELRN</sequence>
<proteinExistence type="evidence at protein level"/>
<protein>
    <recommendedName>
        <fullName evidence="12">CRISPR-associated endonuclease Cas12a</fullName>
        <ecNumber evidence="1">3.1.21.1</ecNumber>
        <ecNumber evidence="1">4.6.1.22</ecNumber>
    </recommendedName>
    <alternativeName>
        <fullName evidence="9">AsCpf1</fullName>
    </alternativeName>
    <alternativeName>
        <fullName evidence="9">CRISPR-associated endonuclease Cpf1</fullName>
    </alternativeName>
</protein>
<accession>U2UMQ6</accession>
<gene>
    <name evidence="12" type="primary">cas12a</name>
    <name evidence="9" type="synonym">cpf1</name>
    <name type="ORF">HMPREF1246_0236</name>
</gene>
<keyword id="KW-0002">3D-structure</keyword>
<keyword id="KW-0051">Antiviral defense</keyword>
<keyword id="KW-0175">Coiled coil</keyword>
<keyword id="KW-0238">DNA-binding</keyword>
<keyword id="KW-0255">Endonuclease</keyword>
<keyword id="KW-0378">Hydrolase</keyword>
<keyword id="KW-0456">Lyase</keyword>
<keyword id="KW-0460">Magnesium</keyword>
<keyword id="KW-0540">Nuclease</keyword>
<keyword id="KW-0694">RNA-binding</keyword>
<dbReference type="EC" id="3.1.21.1" evidence="1"/>
<dbReference type="EC" id="4.6.1.22" evidence="1"/>
<dbReference type="EMBL" id="AWUR01000016">
    <property type="protein sequence ID" value="ERL19323.1"/>
    <property type="molecule type" value="Genomic_DNA"/>
</dbReference>
<dbReference type="RefSeq" id="WP_021736722.1">
    <property type="nucleotide sequence ID" value="NZ_AWUR01000016.1"/>
</dbReference>
<dbReference type="PDB" id="5B43">
    <property type="method" value="X-ray"/>
    <property type="resolution" value="2.80 A"/>
    <property type="chains" value="A=1-1307"/>
</dbReference>
<dbReference type="PDB" id="5KK5">
    <property type="method" value="X-ray"/>
    <property type="resolution" value="3.29 A"/>
    <property type="chains" value="A=1-1307"/>
</dbReference>
<dbReference type="PDB" id="5XH6">
    <property type="method" value="X-ray"/>
    <property type="resolution" value="2.00 A"/>
    <property type="chains" value="A=1-1307"/>
</dbReference>
<dbReference type="PDB" id="5XH7">
    <property type="method" value="X-ray"/>
    <property type="resolution" value="2.00 A"/>
    <property type="chains" value="A=1-1307"/>
</dbReference>
<dbReference type="PDB" id="8SFH">
    <property type="method" value="EM"/>
    <property type="resolution" value="3.40 A"/>
    <property type="chains" value="A=1-1307"/>
</dbReference>
<dbReference type="PDB" id="8SFI">
    <property type="method" value="EM"/>
    <property type="resolution" value="3.50 A"/>
    <property type="chains" value="A=1-1307"/>
</dbReference>
<dbReference type="PDB" id="8SFJ">
    <property type="method" value="EM"/>
    <property type="resolution" value="3.60 A"/>
    <property type="chains" value="A=1-1307"/>
</dbReference>
<dbReference type="PDB" id="8SFL">
    <property type="method" value="EM"/>
    <property type="resolution" value="3.30 A"/>
    <property type="chains" value="A=1-1307"/>
</dbReference>
<dbReference type="PDB" id="8SFN">
    <property type="method" value="EM"/>
    <property type="resolution" value="3.30 A"/>
    <property type="chains" value="A=1-1307"/>
</dbReference>
<dbReference type="PDB" id="8SFO">
    <property type="method" value="EM"/>
    <property type="resolution" value="3.30 A"/>
    <property type="chains" value="A=1-1307"/>
</dbReference>
<dbReference type="PDB" id="8SFP">
    <property type="method" value="EM"/>
    <property type="resolution" value="3.80 A"/>
    <property type="chains" value="A=1-1307"/>
</dbReference>
<dbReference type="PDB" id="8SFQ">
    <property type="method" value="EM"/>
    <property type="resolution" value="3.50 A"/>
    <property type="chains" value="A=1-1307"/>
</dbReference>
<dbReference type="PDB" id="8SFR">
    <property type="method" value="EM"/>
    <property type="resolution" value="3.50 A"/>
    <property type="chains" value="A=1-1307"/>
</dbReference>
<dbReference type="PDB" id="9CJH">
    <property type="method" value="EM"/>
    <property type="resolution" value="3.60 A"/>
    <property type="chains" value="A=1-1307"/>
</dbReference>
<dbReference type="PDB" id="9CJI">
    <property type="method" value="EM"/>
    <property type="resolution" value="3.40 A"/>
    <property type="chains" value="A=1-1307"/>
</dbReference>
<dbReference type="PDB" id="9CJJ">
    <property type="method" value="EM"/>
    <property type="resolution" value="3.50 A"/>
    <property type="chains" value="A=1-1307"/>
</dbReference>
<dbReference type="PDBsum" id="5B43"/>
<dbReference type="PDBsum" id="5KK5"/>
<dbReference type="PDBsum" id="5XH6"/>
<dbReference type="PDBsum" id="5XH7"/>
<dbReference type="PDBsum" id="8SFH"/>
<dbReference type="PDBsum" id="8SFI"/>
<dbReference type="PDBsum" id="8SFJ"/>
<dbReference type="PDBsum" id="8SFL"/>
<dbReference type="PDBsum" id="8SFN"/>
<dbReference type="PDBsum" id="8SFO"/>
<dbReference type="PDBsum" id="8SFP"/>
<dbReference type="PDBsum" id="8SFQ"/>
<dbReference type="PDBsum" id="8SFR"/>
<dbReference type="PDBsum" id="9CJH"/>
<dbReference type="PDBsum" id="9CJI"/>
<dbReference type="PDBsum" id="9CJJ"/>
<dbReference type="EMDB" id="EMD-40441"/>
<dbReference type="EMDB" id="EMD-40442"/>
<dbReference type="EMDB" id="EMD-40443"/>
<dbReference type="EMDB" id="EMD-40444"/>
<dbReference type="EMDB" id="EMD-40445"/>
<dbReference type="EMDB" id="EMD-40446"/>
<dbReference type="EMDB" id="EMD-40447"/>
<dbReference type="EMDB" id="EMD-40448"/>
<dbReference type="EMDB" id="EMD-40449"/>
<dbReference type="EMDB" id="EMD-45631"/>
<dbReference type="EMDB" id="EMD-45632"/>
<dbReference type="EMDB" id="EMD-45633"/>
<dbReference type="SMR" id="U2UMQ6"/>
<dbReference type="PATRIC" id="fig|1111120.3.peg.776"/>
<dbReference type="GO" id="GO:0004530">
    <property type="term" value="F:deoxyribonuclease I activity"/>
    <property type="evidence" value="ECO:0007669"/>
    <property type="project" value="UniProtKB-EC"/>
</dbReference>
<dbReference type="GO" id="GO:0003677">
    <property type="term" value="F:DNA binding"/>
    <property type="evidence" value="ECO:0007669"/>
    <property type="project" value="UniProtKB-KW"/>
</dbReference>
<dbReference type="GO" id="GO:0016829">
    <property type="term" value="F:lyase activity"/>
    <property type="evidence" value="ECO:0007669"/>
    <property type="project" value="UniProtKB-KW"/>
</dbReference>
<dbReference type="GO" id="GO:0003723">
    <property type="term" value="F:RNA binding"/>
    <property type="evidence" value="ECO:0007669"/>
    <property type="project" value="UniProtKB-KW"/>
</dbReference>
<dbReference type="GO" id="GO:0051607">
    <property type="term" value="P:defense response to virus"/>
    <property type="evidence" value="ECO:0007669"/>
    <property type="project" value="UniProtKB-KW"/>
</dbReference>
<dbReference type="InterPro" id="IPR027620">
    <property type="entry name" value="Cas12a"/>
</dbReference>
<dbReference type="InterPro" id="IPR040882">
    <property type="entry name" value="Cas12a_NUC"/>
</dbReference>
<dbReference type="InterPro" id="IPR040787">
    <property type="entry name" value="Cas12a_REC1"/>
</dbReference>
<dbReference type="InterPro" id="IPR054116">
    <property type="entry name" value="Cas12a_REC2"/>
</dbReference>
<dbReference type="InterPro" id="IPR040852">
    <property type="entry name" value="RuvC_1"/>
</dbReference>
<dbReference type="NCBIfam" id="TIGR04330">
    <property type="entry name" value="cas_Cpf1"/>
    <property type="match status" value="1"/>
</dbReference>
<dbReference type="Pfam" id="PF21918">
    <property type="entry name" value="cas_Cpf1_2nd"/>
    <property type="match status" value="1"/>
</dbReference>
<dbReference type="Pfam" id="PF18510">
    <property type="entry name" value="NUC"/>
    <property type="match status" value="1"/>
</dbReference>
<dbReference type="Pfam" id="PF18501">
    <property type="entry name" value="REC1"/>
    <property type="match status" value="1"/>
</dbReference>
<dbReference type="Pfam" id="PF18516">
    <property type="entry name" value="RuvC_1"/>
    <property type="match status" value="1"/>
</dbReference>
<organism>
    <name type="scientific">Acidaminococcus sp. (strain BV3L6)</name>
    <dbReference type="NCBI Taxonomy" id="1111120"/>
    <lineage>
        <taxon>Bacteria</taxon>
        <taxon>Bacillati</taxon>
        <taxon>Bacillota</taxon>
        <taxon>Negativicutes</taxon>
        <taxon>Acidaminococcales</taxon>
        <taxon>Acidaminococcaceae</taxon>
        <taxon>Acidaminococcus</taxon>
    </lineage>
</organism>
<evidence type="ECO:0000250" key="1">
    <source>
        <dbReference type="UniProtKB" id="A0Q7Q2"/>
    </source>
</evidence>
<evidence type="ECO:0000255" key="2"/>
<evidence type="ECO:0000269" key="3">
    <source>
    </source>
</evidence>
<evidence type="ECO:0000269" key="4">
    <source>
    </source>
</evidence>
<evidence type="ECO:0000269" key="5">
    <source>
    </source>
</evidence>
<evidence type="ECO:0000269" key="6">
    <source>
    </source>
</evidence>
<evidence type="ECO:0000269" key="7">
    <source>
    </source>
</evidence>
<evidence type="ECO:0000269" key="8">
    <source>
    </source>
</evidence>
<evidence type="ECO:0000303" key="9">
    <source>
    </source>
</evidence>
<evidence type="ECO:0000303" key="10">
    <source>
    </source>
</evidence>
<evidence type="ECO:0000303" key="11">
    <source>
    </source>
</evidence>
<evidence type="ECO:0000303" key="12">
    <source>
    </source>
</evidence>
<evidence type="ECO:0000305" key="13">
    <source>
    </source>
</evidence>
<evidence type="ECO:0000305" key="14">
    <source>
    </source>
</evidence>
<evidence type="ECO:0007744" key="15">
    <source>
        <dbReference type="PDB" id="5B43"/>
    </source>
</evidence>
<evidence type="ECO:0007744" key="16">
    <source>
        <dbReference type="PDB" id="5KK5"/>
    </source>
</evidence>
<evidence type="ECO:0007744" key="17">
    <source>
        <dbReference type="PDB" id="5XH6"/>
    </source>
</evidence>
<evidence type="ECO:0007744" key="18">
    <source>
        <dbReference type="PDB" id="5XH7"/>
    </source>
</evidence>
<evidence type="ECO:0007829" key="19">
    <source>
        <dbReference type="PDB" id="5B43"/>
    </source>
</evidence>
<evidence type="ECO:0007829" key="20">
    <source>
        <dbReference type="PDB" id="5KK5"/>
    </source>
</evidence>
<evidence type="ECO:0007829" key="21">
    <source>
        <dbReference type="PDB" id="5XH6"/>
    </source>
</evidence>
<evidence type="ECO:0007829" key="22">
    <source>
        <dbReference type="PDB" id="5XH7"/>
    </source>
</evidence>
<evidence type="ECO:0007829" key="23">
    <source>
        <dbReference type="PDB" id="8SFH"/>
    </source>
</evidence>
<evidence type="ECO:0007829" key="24">
    <source>
        <dbReference type="PDB" id="8SFI"/>
    </source>
</evidence>
<evidence type="ECO:0007829" key="25">
    <source>
        <dbReference type="PDB" id="8SFL"/>
    </source>
</evidence>
<evidence type="ECO:0007829" key="26">
    <source>
        <dbReference type="PDB" id="8SFN"/>
    </source>
</evidence>
<evidence type="ECO:0007829" key="27">
    <source>
        <dbReference type="PDB" id="8SFO"/>
    </source>
</evidence>
<comment type="function">
    <text evidence="1 3 4 8">CRISPR (clustered regularly interspaced short palindromic repeat), is an adaptive immune system that provides protection against mobile genetic elements (viruses, transposable elements and conjugative plasmids). CRISPR clusters contain sequences complementary to antecedent mobile elements and target invading nucleic acids. CRISPR clusters are transcribed and processed into CRISPR RNA (crRNA). Recognizes a short motif in the CRISPR repeat sequences (the 5' PAM or protospacer adjacent motif, TTTN in this organism) to help distinguish self versus nonself, as targets within the bacterial CRISPR locus do not have PAMs (PubMed:26422227). Has dsDNA endonuclease activity, results in staggered 4-base 5' overhangs 19 and 22 bases downstream of the PAM on the non-targeted and targeted strand respectively (PubMed:26422227). Non-target strand cleavage by the RuvC domain is probably a prerequisite of target strand cleavage by the Nuc domain (PubMed:27114038). Protects E.coli against plasmids and bacteriophage M13mp18, phage T4 with hydroxymethyl or unmodified (but not glycosylated) cytosines and to a lesser extent against lambda and VpaE1 phage (PubMed:38261981). In this CRISPR system correct processing of pre-crRNA requires only this protein and the CRISPR locus (By similarity).</text>
</comment>
<comment type="catalytic activity">
    <reaction evidence="1">
        <text>Endonucleolytic cleavage to 5'-phosphodinucleotide and 5'-phosphooligonucleotide end-products.</text>
        <dbReference type="EC" id="3.1.21.1"/>
    </reaction>
</comment>
<comment type="catalytic activity">
    <reaction evidence="1">
        <text>RNA = a 5'-hydroxy-ribonucleotide + n nucleoside-2',3'-cyclophosphates.</text>
        <dbReference type="EC" id="4.6.1.22"/>
    </reaction>
</comment>
<comment type="cofactor">
    <cofactor evidence="1">
        <name>Mg(2+)</name>
        <dbReference type="ChEBI" id="CHEBI:18420"/>
    </cofactor>
</comment>
<comment type="subunit">
    <text evidence="4 6">Monomer (PubMed:27114038).</text>
</comment>
<comment type="domain">
    <text evidence="4 6">Has a bilobed structure, with the REC lobe (residues 35-526) connected to the NUC lobe (residues 1-35 and 526-1307) by a discontinuous wedge domain (PubMed:27114038, PubMed:27444870). The crRNA-target DNA heteroduplex is bound in the channel between the 2 lobes (PubMed:27114038, PubMed:27444870). One nuclease site is found in the discontinuous RuvC domain which probably cuts target DNA strand in the crRNA-DNA heteroduplex (residues 884-940, 957-1066 and 1262-1307), the other in the NUC domain and probably cuts the non-target DNA strand outside the heteroduplex (residues 1067-1261) (PubMed:27114038). Target DNA binding induces domain movement (PubMed:27444870).</text>
</comment>
<comment type="biotechnology">
    <text evidence="3 5 7">This class of CRISPR enzymes recognize a 5' T-rich protospacer adjacent motif (PAM, TTTN for this specific enzyme), unlike Cas9 enzymes which recognize 3' G-rich PAMs, thus this enzyme increases the possibilites for genome editing (PubMed:26422227). When appropriately expressed in a human cell line mediates human genome editing via indel formation; its T-rich PAM sequence may make it useful for engineering of AT-rich genomes or of regions such as scaffold-matrix attachment areas (PubMed:26422227, PubMed:27347757). It has also been engineered to recognize altered PAM sequences, which will enlarge its target scope (PubMed:28595896).</text>
</comment>
<comment type="miscellaneous">
    <text evidence="13 14">Part of a type V-A CRISPR-Cas system.</text>
</comment>
<comment type="similarity">
    <text evidence="14">Belongs to the CRISPR-associated endonuclease Cas12a family.</text>
</comment>